<comment type="function">
    <text evidence="2 4">Receptor for glucocorticoids (GC). Has a dual mode of action: as a transcription factor that binds to glucocorticoid response elements (GRE), both for nuclear and mitochondrial DNA, and as a modulator of other transcription factors. Affects inflammatory responses, cellular proliferation and differentiation in target tissues. Involved in chromatin remodeling. Plays a role in rapid mRNA degradation by binding to the 5' UTR of target mRNAs and interacting with PNRC2 in a ligand-dependent manner which recruits the RNA helicase UPF1 and the mRNA-decapping enzyme DCP1A, leading to RNA decay. Could act as a coactivator for STAT5-dependent transcription upon growth hormone (GH) stimulation and could reveal an essential role of hepatic GR in the control of body growth. Mediates glucocorticoid-induced apoptosis. Promotes accurate chromosome segregation during mitosis. May act as a tumor suppressor. May play a negative role in adipogenesis through the regulation of lipolytic and antilipogenic gene expression.</text>
</comment>
<comment type="subunit">
    <text evidence="2 3 4">Heteromultimeric cytoplasmic complex with HSP90AA1, HSPA1A/HSPA1B, and FKBP5 or another immunophilin such as PPID, STIP1, or the immunophilin homolog PPP5C. Upon ligand binding FKBP5 dissociates from the complex and FKBP4 takes its place, thereby linking the complex to dynein and mediating transport to the nucleus, where the complex dissociates. Probably forms a complex composed of chaperones HSP90 and HSP70, co-chaperones CDC37, PPP5C, TSC1 and client protein TSC2, CDK4, AKT, RAF1 and NR3C1; this complex does not contain co-chaperones STIP1/HOP and PTGES3/p23. Directly interacts with UNC45A. Binds to DNA as a homodimer, and as heterodimer with NR3C2 or the retinoid X receptor. Binds STAT5A and STAT5B homodimers and heterodimers. Interacts with NRIP1, POU2F1, POU2F2 and TRIM28. Interacts with several coactivator complexes, including the SMARCA4 complex, CREBBP/EP300, TADA2L (Ada complex) and p160 coactivators such as NCOA2 and NCOA6. Interaction with BAG1 inhibits transactivation. Interacts with HEXIM1 and TGFB1I1. Interacts with NCOA1. Interacts with NCOA3, SMARCA4, SMARCC1, SMARCD1, and SMARCE1. Interacts with CLOCK, CRY1 and CRY2 in a ligand-dependent fashion. Interacts with CIART. Interacts with RWDD3. Interacts with UBE2I/UBC9 and this interaction is enhanced in the presence of RWDD3. Interacts with GRIP1. Interacts with NR4A3 (via nuclear receptor DNA-binding domain), represses transcription activity of NR4A3 on the POMC promoter Nur response element (NurRE). Directly interacts with PNRC2 to attract and form a complex with UPF1 and DCP1A; the interaction leads to rapid mRNA degradation. Interacts with GSK3B. Interacts with FNIP1 and FNIP2. Interacts (via C-terminus) with NR3C1 (via C-terminus). Interacts with MCM3AP (By similarity). Interacts (via domain NR LBD) with HSP90AA1 and HSP90AB1 (By similarity). In the absence of hormonal ligand, interacts with TACC1 (By similarity).</text>
</comment>
<comment type="subcellular location">
    <subcellularLocation>
        <location evidence="2">Cytoplasm</location>
    </subcellularLocation>
    <subcellularLocation>
        <location evidence="2">Nucleus</location>
    </subcellularLocation>
    <subcellularLocation>
        <location evidence="2">Mitochondrion</location>
    </subcellularLocation>
    <subcellularLocation>
        <location evidence="2">Cytoplasm</location>
        <location evidence="2">Cytoskeleton</location>
        <location evidence="2">Spindle</location>
    </subcellularLocation>
    <subcellularLocation>
        <location evidence="2">Cytoplasm</location>
        <location evidence="2">Cytoskeleton</location>
        <location evidence="2">Microtubule organizing center</location>
        <location evidence="2">Centrosome</location>
    </subcellularLocation>
    <subcellularLocation>
        <location evidence="4">Chromosome</location>
    </subcellularLocation>
    <subcellularLocation>
        <location evidence="4">Nucleus</location>
        <location evidence="4">Nucleoplasm</location>
    </subcellularLocation>
    <text evidence="2 4">After ligand activation, translocates from the cytoplasm to the nucleus (By similarity). The hormone-occupied receptor undergoes rapid exchange between chromatin and the nucleoplasmic compartment. In the presence of NR1D1 shows a time-dependent subcellular localization, localizing to the cytoplasm at ZT8 and to the nucleus at ZT20. Lacks this diurnal pattern of localization in the absence of NR1D1, localizing to both nucleus and the cytoplasm at ZT8 and ZT20. Upon dexamethasone binding associates with the glucocorticoid response elements of target genes (By similarity).</text>
</comment>
<comment type="domain">
    <text evidence="2">Composed of three domains: a modulating N-terminal domain, a DNA-binding domain and a C-terminal ligand-binding domain. The ligand-binding domain is required for correct chromosome segregation during mitosis although ligand binding is not required.</text>
</comment>
<comment type="PTM">
    <text evidence="1">Acetylation by CLOCK reduces its binding to glucocorticoid response elements and its transcriptional activity.</text>
</comment>
<comment type="PTM">
    <text evidence="2">Increased proteasome-mediated degradation in response to glucocorticoids.</text>
</comment>
<comment type="PTM">
    <text evidence="2 4">Phosphorylated in the absence of hormone; becomes hyperphosphorylated in the presence of glucocorticoid. The Ser-203, Ser-226 and Ser-404-phosphorylated forms are mainly cytoplasmic, and the Ser-211-phosphorylated form is nuclear. Phosphorylation at Ser-211 increases transcriptional activity. Phosphorylation at Ser-203, Ser-226 and Ser-404 decreases signaling capacity. Phosphorylation at Ser-404 may protect from glucocorticoid-induced apoptosis. Phosphorylation at Ser-203 and Ser-211 is not required in regulation of chromosome segregation. May be dephosphorylated by PPP5C, attenuates NR3C1 action.</text>
</comment>
<comment type="PTM">
    <text evidence="3">Sumoylation at Lys-277 and Lys-293 negatively regulates its transcriptional activity. Sumoylation at Lys-702 positively regulates its transcriptional activity in the presence of RWDD3. Sumoylation at Lys-277 and Lys-293 is dispensable whereas sumoylation at Lys-702 is critical for the stimulatory effect of RWDD3 on its transcriptional activity. Heat shock increases sumoylation in a RWDD3-dependent manner.</text>
</comment>
<comment type="PTM">
    <text evidence="4">Ubiquitinated by UBR5, leading to its degradation: UBR5 specifically recognizes and binds ligand-bound NR3C1 when it is not associated with coactivators (NCOAs) (By similarity). In presence of NCOAs, the UBR5-degron is not accessible, preventing its ubiquitination and degradation (By similarity).</text>
</comment>
<comment type="similarity">
    <text evidence="8">Belongs to the nuclear hormone receptor family. NR3 subfamily.</text>
</comment>
<sequence>MDSKESLTSPSEEIPSSVHGQERGNVMDFYKTRRGGATVKVFMPSPSLGGSSQSDSKQQRLLVDFPKGSVSNVQQPDLSKAVSLSMGLYMGETETKVMGNDLGFPQQGQITLSSGETNLQLLEESIANLNRSTSVPEHPKISASVAVSAALLKKELPETPSDVSSEQQNLKGQTGTNGGNVKLCTADQSTFDILQDLEFSSASPGRETNESPWRSDLLLDENCLLSPLAVEDDPFLSEGNLKEDCKPLILPDTKPKIKDNGDLILSSPKNVPLPQVKTEKEDFIELCTPGVIKQEKLGPVYCQANFSGANIIGNKMSAISVHGVSTSGGQMYHYDMNTATLSQQQDQKPIFNVIPPIPVSSENWNRCQGSGDENLTSLGTLNFSGRSVFSNGYSSPGMRPDVSSPPSNSLSAVGPPPKFCLVCSDEASGCHYGVLTCGSCKVFFKRAVEGQHNYLCAGRNDCIIDKIRRKNCPACRYRKCLQAGMNLEARKTKKKIKGIQQTTTGISQETPENSANKTIVPATLPQLTPTPVSLLEVIEPEVLYAGYDSSLPDTTWRIMSALNMLGGRQVIAAVKWAKAIPGFRNLHLDDQMTLLQYSWMFLMAFALGWRSYKQASANLLCFAPDLIINEQRMSLPFMYDQCKHMLFVSSELQRLQVSYEEYLCMKTLLLLSSVPKEGLKSQELFDEIRMTYIKELGKAIVKREGNSSQNWQRFYQLTKLLDSMHDVVENLLNYCFQTFLDKTMRIEFPEMLAEIITNQIPKYSSGNIKKLLFHQK</sequence>
<evidence type="ECO:0000250" key="1"/>
<evidence type="ECO:0000250" key="2">
    <source>
        <dbReference type="UniProtKB" id="P04150"/>
    </source>
</evidence>
<evidence type="ECO:0000250" key="3">
    <source>
        <dbReference type="UniProtKB" id="P06536"/>
    </source>
</evidence>
<evidence type="ECO:0000250" key="4">
    <source>
        <dbReference type="UniProtKB" id="P06537"/>
    </source>
</evidence>
<evidence type="ECO:0000255" key="5">
    <source>
        <dbReference type="PROSITE-ProRule" id="PRU00407"/>
    </source>
</evidence>
<evidence type="ECO:0000255" key="6">
    <source>
        <dbReference type="PROSITE-ProRule" id="PRU01189"/>
    </source>
</evidence>
<evidence type="ECO:0000256" key="7">
    <source>
        <dbReference type="SAM" id="MobiDB-lite"/>
    </source>
</evidence>
<evidence type="ECO:0000305" key="8"/>
<name>GCR_TUPBE</name>
<dbReference type="EMBL" id="Z75079">
    <property type="protein sequence ID" value="CAA99379.1"/>
    <property type="molecule type" value="mRNA"/>
</dbReference>
<dbReference type="SMR" id="Q95267"/>
<dbReference type="GO" id="GO:0005813">
    <property type="term" value="C:centrosome"/>
    <property type="evidence" value="ECO:0007669"/>
    <property type="project" value="UniProtKB-SubCell"/>
</dbReference>
<dbReference type="GO" id="GO:0005694">
    <property type="term" value="C:chromosome"/>
    <property type="evidence" value="ECO:0007669"/>
    <property type="project" value="UniProtKB-SubCell"/>
</dbReference>
<dbReference type="GO" id="GO:0005737">
    <property type="term" value="C:cytoplasm"/>
    <property type="evidence" value="ECO:0000250"/>
    <property type="project" value="UniProtKB"/>
</dbReference>
<dbReference type="GO" id="GO:0005739">
    <property type="term" value="C:mitochondrion"/>
    <property type="evidence" value="ECO:0007669"/>
    <property type="project" value="UniProtKB-SubCell"/>
</dbReference>
<dbReference type="GO" id="GO:0016607">
    <property type="term" value="C:nuclear speck"/>
    <property type="evidence" value="ECO:0000250"/>
    <property type="project" value="UniProtKB"/>
</dbReference>
<dbReference type="GO" id="GO:0005634">
    <property type="term" value="C:nucleus"/>
    <property type="evidence" value="ECO:0000250"/>
    <property type="project" value="UniProtKB"/>
</dbReference>
<dbReference type="GO" id="GO:0005819">
    <property type="term" value="C:spindle"/>
    <property type="evidence" value="ECO:0007669"/>
    <property type="project" value="UniProtKB-SubCell"/>
</dbReference>
<dbReference type="GO" id="GO:0003700">
    <property type="term" value="F:DNA-binding transcription factor activity"/>
    <property type="evidence" value="ECO:0000250"/>
    <property type="project" value="UniProtKB"/>
</dbReference>
<dbReference type="GO" id="GO:0004883">
    <property type="term" value="F:nuclear glucocorticoid receptor activity"/>
    <property type="evidence" value="ECO:0007669"/>
    <property type="project" value="InterPro"/>
</dbReference>
<dbReference type="GO" id="GO:0004879">
    <property type="term" value="F:nuclear receptor activity"/>
    <property type="evidence" value="ECO:0000250"/>
    <property type="project" value="UniProtKB"/>
</dbReference>
<dbReference type="GO" id="GO:0043565">
    <property type="term" value="F:sequence-specific DNA binding"/>
    <property type="evidence" value="ECO:0007669"/>
    <property type="project" value="InterPro"/>
</dbReference>
<dbReference type="GO" id="GO:0005496">
    <property type="term" value="F:steroid binding"/>
    <property type="evidence" value="ECO:0000250"/>
    <property type="project" value="UniProtKB"/>
</dbReference>
<dbReference type="GO" id="GO:1990239">
    <property type="term" value="F:steroid hormone binding"/>
    <property type="evidence" value="ECO:0000250"/>
    <property type="project" value="UniProtKB"/>
</dbReference>
<dbReference type="GO" id="GO:0008270">
    <property type="term" value="F:zinc ion binding"/>
    <property type="evidence" value="ECO:0007669"/>
    <property type="project" value="UniProtKB-KW"/>
</dbReference>
<dbReference type="GO" id="GO:0071385">
    <property type="term" value="P:cellular response to glucocorticoid stimulus"/>
    <property type="evidence" value="ECO:0000250"/>
    <property type="project" value="UniProtKB"/>
</dbReference>
<dbReference type="GO" id="GO:0071383">
    <property type="term" value="P:cellular response to steroid hormone stimulus"/>
    <property type="evidence" value="ECO:0000250"/>
    <property type="project" value="UniProtKB"/>
</dbReference>
<dbReference type="GO" id="GO:0006325">
    <property type="term" value="P:chromatin organization"/>
    <property type="evidence" value="ECO:0007669"/>
    <property type="project" value="UniProtKB-KW"/>
</dbReference>
<dbReference type="GO" id="GO:0045944">
    <property type="term" value="P:positive regulation of transcription by RNA polymerase II"/>
    <property type="evidence" value="ECO:0000250"/>
    <property type="project" value="UniProtKB"/>
</dbReference>
<dbReference type="CDD" id="cd07172">
    <property type="entry name" value="NR_DBD_GR_PR"/>
    <property type="match status" value="1"/>
</dbReference>
<dbReference type="CDD" id="cd07076">
    <property type="entry name" value="NR_LBD_GR"/>
    <property type="match status" value="1"/>
</dbReference>
<dbReference type="FunFam" id="1.10.565.10:FF:000004">
    <property type="entry name" value="Androgen receptor variant"/>
    <property type="match status" value="1"/>
</dbReference>
<dbReference type="FunFam" id="3.30.50.10:FF:000022">
    <property type="entry name" value="glucocorticoid receptor isoform X1"/>
    <property type="match status" value="1"/>
</dbReference>
<dbReference type="Gene3D" id="3.30.50.10">
    <property type="entry name" value="Erythroid Transcription Factor GATA-1, subunit A"/>
    <property type="match status" value="1"/>
</dbReference>
<dbReference type="Gene3D" id="1.10.565.10">
    <property type="entry name" value="Retinoid X Receptor"/>
    <property type="match status" value="1"/>
</dbReference>
<dbReference type="InterPro" id="IPR001409">
    <property type="entry name" value="Glcrtcd_rcpt"/>
</dbReference>
<dbReference type="InterPro" id="IPR035500">
    <property type="entry name" value="NHR-like_dom_sf"/>
</dbReference>
<dbReference type="InterPro" id="IPR000536">
    <property type="entry name" value="Nucl_hrmn_rcpt_lig-bd"/>
</dbReference>
<dbReference type="InterPro" id="IPR050200">
    <property type="entry name" value="Nuclear_hormone_rcpt_NR3"/>
</dbReference>
<dbReference type="InterPro" id="IPR001723">
    <property type="entry name" value="Nuclear_hrmn_rcpt"/>
</dbReference>
<dbReference type="InterPro" id="IPR001628">
    <property type="entry name" value="Znf_hrmn_rcpt"/>
</dbReference>
<dbReference type="InterPro" id="IPR013088">
    <property type="entry name" value="Znf_NHR/GATA"/>
</dbReference>
<dbReference type="PANTHER" id="PTHR48092">
    <property type="entry name" value="KNIRPS-RELATED PROTEIN-RELATED"/>
    <property type="match status" value="1"/>
</dbReference>
<dbReference type="Pfam" id="PF02155">
    <property type="entry name" value="GCR"/>
    <property type="match status" value="1"/>
</dbReference>
<dbReference type="Pfam" id="PF00104">
    <property type="entry name" value="Hormone_recep"/>
    <property type="match status" value="1"/>
</dbReference>
<dbReference type="Pfam" id="PF00105">
    <property type="entry name" value="zf-C4"/>
    <property type="match status" value="1"/>
</dbReference>
<dbReference type="PRINTS" id="PR00528">
    <property type="entry name" value="GLCORTICOIDR"/>
</dbReference>
<dbReference type="PRINTS" id="PR00398">
    <property type="entry name" value="STRDHORMONER"/>
</dbReference>
<dbReference type="PRINTS" id="PR00047">
    <property type="entry name" value="STROIDFINGER"/>
</dbReference>
<dbReference type="SMART" id="SM00430">
    <property type="entry name" value="HOLI"/>
    <property type="match status" value="1"/>
</dbReference>
<dbReference type="SMART" id="SM00399">
    <property type="entry name" value="ZnF_C4"/>
    <property type="match status" value="1"/>
</dbReference>
<dbReference type="SUPFAM" id="SSF57716">
    <property type="entry name" value="Glucocorticoid receptor-like (DNA-binding domain)"/>
    <property type="match status" value="1"/>
</dbReference>
<dbReference type="SUPFAM" id="SSF48508">
    <property type="entry name" value="Nuclear receptor ligand-binding domain"/>
    <property type="match status" value="1"/>
</dbReference>
<dbReference type="PROSITE" id="PS51843">
    <property type="entry name" value="NR_LBD"/>
    <property type="match status" value="1"/>
</dbReference>
<dbReference type="PROSITE" id="PS00031">
    <property type="entry name" value="NUCLEAR_REC_DBD_1"/>
    <property type="match status" value="1"/>
</dbReference>
<dbReference type="PROSITE" id="PS51030">
    <property type="entry name" value="NUCLEAR_REC_DBD_2"/>
    <property type="match status" value="1"/>
</dbReference>
<accession>Q95267</accession>
<proteinExistence type="evidence at transcript level"/>
<feature type="chain" id="PRO_0000053678" description="Glucocorticoid receptor">
    <location>
        <begin position="1"/>
        <end position="776"/>
    </location>
</feature>
<feature type="domain" description="NR LBD" evidence="6">
    <location>
        <begin position="523"/>
        <end position="757"/>
    </location>
</feature>
<feature type="DNA-binding region" description="Nuclear receptor" evidence="5">
    <location>
        <begin position="417"/>
        <end position="492"/>
    </location>
</feature>
<feature type="zinc finger region" description="NR C4-type" evidence="5">
    <location>
        <begin position="420"/>
        <end position="440"/>
    </location>
</feature>
<feature type="zinc finger region" description="NR C4-type" evidence="5">
    <location>
        <begin position="456"/>
        <end position="480"/>
    </location>
</feature>
<feature type="region of interest" description="Modulating">
    <location>
        <begin position="1"/>
        <end position="419"/>
    </location>
</feature>
<feature type="region of interest" description="Disordered" evidence="7">
    <location>
        <begin position="1"/>
        <end position="25"/>
    </location>
</feature>
<feature type="region of interest" description="Disordered" evidence="7">
    <location>
        <begin position="157"/>
        <end position="178"/>
    </location>
</feature>
<feature type="region of interest" description="Interaction with CLOCK" evidence="1">
    <location>
        <begin position="484"/>
        <end position="776"/>
    </location>
</feature>
<feature type="region of interest" description="Hinge">
    <location>
        <begin position="486"/>
        <end position="522"/>
    </location>
</feature>
<feature type="region of interest" description="Interaction with CRY1" evidence="1">
    <location>
        <begin position="531"/>
        <end position="696"/>
    </location>
</feature>
<feature type="compositionally biased region" description="Polar residues" evidence="7">
    <location>
        <begin position="1"/>
        <end position="11"/>
    </location>
</feature>
<feature type="compositionally biased region" description="Polar residues" evidence="7">
    <location>
        <begin position="161"/>
        <end position="174"/>
    </location>
</feature>
<feature type="modified residue" description="Phosphothreonine" evidence="2">
    <location>
        <position position="8"/>
    </location>
</feature>
<feature type="modified residue" description="Omega-N-methylarginine" evidence="4">
    <location>
        <position position="23"/>
    </location>
</feature>
<feature type="modified residue" description="Phosphoserine" evidence="2">
    <location>
        <position position="45"/>
    </location>
</feature>
<feature type="modified residue" description="Phosphoserine" evidence="4">
    <location>
        <position position="113"/>
    </location>
</feature>
<feature type="modified residue" description="Phosphoserine" evidence="2">
    <location>
        <position position="134"/>
    </location>
</feature>
<feature type="modified residue" description="Phosphoserine" evidence="2">
    <location>
        <position position="203"/>
    </location>
</feature>
<feature type="modified residue" description="Phosphoserine" evidence="2">
    <location>
        <position position="211"/>
    </location>
</feature>
<feature type="modified residue" description="Phosphoserine" evidence="2">
    <location>
        <position position="226"/>
    </location>
</feature>
<feature type="modified residue" description="Phosphoserine" evidence="2">
    <location>
        <position position="267"/>
    </location>
</feature>
<feature type="modified residue" description="Phosphoserine" evidence="4">
    <location>
        <position position="307"/>
    </location>
</feature>
<feature type="modified residue" description="Phosphoserine" evidence="2">
    <location>
        <position position="404"/>
    </location>
</feature>
<feature type="modified residue" description="N6-acetyllysine" evidence="2">
    <location>
        <position position="479"/>
    </location>
</feature>
<feature type="modified residue" description="N6-acetyllysine" evidence="2">
    <location>
        <position position="491"/>
    </location>
</feature>
<feature type="modified residue" description="N6-acetyllysine" evidence="2">
    <location>
        <position position="493"/>
    </location>
</feature>
<feature type="modified residue" description="N6-acetyllysine" evidence="2">
    <location>
        <position position="494"/>
    </location>
</feature>
<feature type="cross-link" description="Glycyl lysine isopeptide (Lys-Gly) (interchain with G-Cter in SUMO2)" evidence="2">
    <location>
        <position position="258"/>
    </location>
</feature>
<feature type="cross-link" description="Glycyl lysine isopeptide (Lys-Gly) (interchain with G-Cter in SUMO); alternate" evidence="2">
    <location>
        <position position="277"/>
    </location>
</feature>
<feature type="cross-link" description="Glycyl lysine isopeptide (Lys-Gly) (interchain with G-Cter in SUMO2); alternate" evidence="2">
    <location>
        <position position="277"/>
    </location>
</feature>
<feature type="cross-link" description="Glycyl lysine isopeptide (Lys-Gly) (interchain with G-Cter in SUMO); alternate" evidence="2">
    <location>
        <position position="293"/>
    </location>
</feature>
<feature type="cross-link" description="Glycyl lysine isopeptide (Lys-Gly) (interchain with G-Cter in SUMO2); alternate" evidence="2">
    <location>
        <position position="293"/>
    </location>
</feature>
<feature type="cross-link" description="Glycyl lysine isopeptide (Lys-Gly) (interchain with G-Cter in ubiquitin)" evidence="4">
    <location>
        <position position="418"/>
    </location>
</feature>
<feature type="cross-link" description="Glycyl lysine isopeptide (Lys-Gly) (interchain with G-Cter in SUMO)" evidence="2">
    <location>
        <position position="702"/>
    </location>
</feature>
<keyword id="KW-0007">Acetylation</keyword>
<keyword id="KW-0156">Chromatin regulator</keyword>
<keyword id="KW-0158">Chromosome</keyword>
<keyword id="KW-0963">Cytoplasm</keyword>
<keyword id="KW-0206">Cytoskeleton</keyword>
<keyword id="KW-0238">DNA-binding</keyword>
<keyword id="KW-1017">Isopeptide bond</keyword>
<keyword id="KW-0446">Lipid-binding</keyword>
<keyword id="KW-0479">Metal-binding</keyword>
<keyword id="KW-0488">Methylation</keyword>
<keyword id="KW-0496">Mitochondrion</keyword>
<keyword id="KW-0539">Nucleus</keyword>
<keyword id="KW-0597">Phosphoprotein</keyword>
<keyword id="KW-0675">Receptor</keyword>
<keyword id="KW-0754">Steroid-binding</keyword>
<keyword id="KW-0804">Transcription</keyword>
<keyword id="KW-0805">Transcription regulation</keyword>
<keyword id="KW-0832">Ubl conjugation</keyword>
<keyword id="KW-0862">Zinc</keyword>
<keyword id="KW-0863">Zinc-finger</keyword>
<reference key="1">
    <citation type="journal article" date="1998" name="Brain Res. Mol. Brain Res.">
        <title>Cloning of glucocorticoid receptor and mineralocorticoid receptor cDNA and gene expression in the central nervous system of the tree shrew (Tupaia belangeri).</title>
        <authorList>
            <person name="Meyer U."/>
            <person name="Kruhoeffer M."/>
            <person name="Flugge G."/>
            <person name="Fuchs E."/>
        </authorList>
    </citation>
    <scope>NUCLEOTIDE SEQUENCE [MRNA]</scope>
    <source>
        <tissue>Brain</tissue>
    </source>
</reference>
<organism>
    <name type="scientific">Tupaia belangeri</name>
    <name type="common">Common tree shrew</name>
    <name type="synonym">Tupaia glis belangeri</name>
    <dbReference type="NCBI Taxonomy" id="37347"/>
    <lineage>
        <taxon>Eukaryota</taxon>
        <taxon>Metazoa</taxon>
        <taxon>Chordata</taxon>
        <taxon>Craniata</taxon>
        <taxon>Vertebrata</taxon>
        <taxon>Euteleostomi</taxon>
        <taxon>Mammalia</taxon>
        <taxon>Eutheria</taxon>
        <taxon>Euarchontoglires</taxon>
        <taxon>Scandentia</taxon>
        <taxon>Tupaiidae</taxon>
        <taxon>Tupaia</taxon>
    </lineage>
</organism>
<gene>
    <name type="primary">NR3C1</name>
    <name type="synonym">GRL</name>
</gene>
<protein>
    <recommendedName>
        <fullName>Glucocorticoid receptor</fullName>
        <shortName>GR</shortName>
    </recommendedName>
    <alternativeName>
        <fullName>Nuclear receptor subfamily 3 group C member 1</fullName>
    </alternativeName>
</protein>